<keyword id="KW-0067">ATP-binding</keyword>
<keyword id="KW-0175">Coiled coil</keyword>
<keyword id="KW-0227">DNA damage</keyword>
<keyword id="KW-0234">DNA repair</keyword>
<keyword id="KW-0378">Hydrolase</keyword>
<keyword id="KW-0479">Metal-binding</keyword>
<keyword id="KW-0547">Nucleotide-binding</keyword>
<keyword id="KW-0862">Zinc</keyword>
<feature type="chain" id="PRO_0000138668" description="DNA double-strand break repair Rad50 ATPase">
    <location>
        <begin position="1"/>
        <end position="895"/>
    </location>
</feature>
<feature type="domain" description="Zinc-hook" evidence="1">
    <location>
        <begin position="411"/>
        <end position="507"/>
    </location>
</feature>
<feature type="coiled-coil region" evidence="1">
    <location>
        <begin position="183"/>
        <end position="253"/>
    </location>
</feature>
<feature type="coiled-coil region" evidence="1">
    <location>
        <begin position="464"/>
        <end position="510"/>
    </location>
</feature>
<feature type="coiled-coil region" evidence="1">
    <location>
        <begin position="618"/>
        <end position="647"/>
    </location>
</feature>
<feature type="binding site" evidence="1">
    <location>
        <begin position="32"/>
        <end position="38"/>
    </location>
    <ligand>
        <name>ATP</name>
        <dbReference type="ChEBI" id="CHEBI:30616"/>
    </ligand>
</feature>
<feature type="binding site" evidence="1">
    <location>
        <position position="137"/>
    </location>
    <ligand>
        <name>ATP</name>
        <dbReference type="ChEBI" id="CHEBI:30616"/>
    </ligand>
</feature>
<feature type="binding site" evidence="1">
    <location>
        <position position="455"/>
    </location>
    <ligand>
        <name>Zn(2+)</name>
        <dbReference type="ChEBI" id="CHEBI:29105"/>
    </ligand>
</feature>
<feature type="binding site" evidence="1">
    <location>
        <position position="458"/>
    </location>
    <ligand>
        <name>Zn(2+)</name>
        <dbReference type="ChEBI" id="CHEBI:29105"/>
    </ligand>
</feature>
<organism>
    <name type="scientific">Thermoplasma volcanium (strain ATCC 51530 / DSM 4299 / JCM 9571 / NBRC 15438 / GSS1)</name>
    <dbReference type="NCBI Taxonomy" id="273116"/>
    <lineage>
        <taxon>Archaea</taxon>
        <taxon>Methanobacteriati</taxon>
        <taxon>Thermoplasmatota</taxon>
        <taxon>Thermoplasmata</taxon>
        <taxon>Thermoplasmatales</taxon>
        <taxon>Thermoplasmataceae</taxon>
        <taxon>Thermoplasma</taxon>
    </lineage>
</organism>
<accession>P58302</accession>
<evidence type="ECO:0000255" key="1">
    <source>
        <dbReference type="HAMAP-Rule" id="MF_00449"/>
    </source>
</evidence>
<gene>
    <name evidence="1" type="primary">rad50</name>
    <name type="ordered locus">TV0228</name>
    <name type="ORF">TVG0235331</name>
</gene>
<proteinExistence type="inferred from homology"/>
<name>RAD50_THEVO</name>
<comment type="function">
    <text evidence="1">Part of the Rad50/Mre11 complex, which is involved in the early steps of DNA double-strand break (DSB) repair. The complex may facilitate opening of the processed DNA ends to aid in the recruitment of HerA and NurA. Rad50 controls the balance between DNA end bridging and DNA resection via ATP-dependent structural rearrangements of the Rad50/Mre11 complex.</text>
</comment>
<comment type="cofactor">
    <cofactor evidence="1">
        <name>Zn(2+)</name>
        <dbReference type="ChEBI" id="CHEBI:29105"/>
    </cofactor>
    <text evidence="1">Binds 1 zinc ion per homodimer.</text>
</comment>
<comment type="subunit">
    <text evidence="1">Homodimer. Forms a heterotetramer composed of two Mre11 subunits and two Rad50 subunits.</text>
</comment>
<comment type="domain">
    <text evidence="1">The two conserved Cys that bind zinc constitute the zinc-hook, which separates the large intramolecular coiled coil regions. The 2 Cys residues coordinate one molecule of zinc with the help of the 2 Cys residues of the zinc-hook of another Rad50 molecule, thereby forming a V-shaped homodimer.</text>
</comment>
<comment type="similarity">
    <text evidence="1">Belongs to the SMC family. RAD50 subfamily.</text>
</comment>
<protein>
    <recommendedName>
        <fullName evidence="1">DNA double-strand break repair Rad50 ATPase</fullName>
    </recommendedName>
</protein>
<reference key="1">
    <citation type="journal article" date="2000" name="Proc. Natl. Acad. Sci. U.S.A.">
        <title>Archaeal adaptation to higher temperatures revealed by genomic sequence of Thermoplasma volcanium.</title>
        <authorList>
            <person name="Kawashima T."/>
            <person name="Amano N."/>
            <person name="Koike H."/>
            <person name="Makino S."/>
            <person name="Higuchi S."/>
            <person name="Kawashima-Ohya Y."/>
            <person name="Watanabe K."/>
            <person name="Yamazaki M."/>
            <person name="Kanehori K."/>
            <person name="Kawamoto T."/>
            <person name="Nunoshiba T."/>
            <person name="Yamamoto Y."/>
            <person name="Aramaki H."/>
            <person name="Makino K."/>
            <person name="Suzuki M."/>
        </authorList>
    </citation>
    <scope>NUCLEOTIDE SEQUENCE [LARGE SCALE GENOMIC DNA]</scope>
    <source>
        <strain>ATCC 51530 / DSM 4299 / JCM 9571 / NBRC 15438 / GSS1</strain>
    </source>
</reference>
<dbReference type="EMBL" id="BA000011">
    <property type="protein sequence ID" value="BAB59370.1"/>
    <property type="molecule type" value="Genomic_DNA"/>
</dbReference>
<dbReference type="RefSeq" id="WP_010916483.1">
    <property type="nucleotide sequence ID" value="NC_002689.2"/>
</dbReference>
<dbReference type="SMR" id="P58302"/>
<dbReference type="STRING" id="273116.gene:9380999"/>
<dbReference type="PaxDb" id="273116-14324442"/>
<dbReference type="GeneID" id="1440743"/>
<dbReference type="KEGG" id="tvo:TVG0235331"/>
<dbReference type="eggNOG" id="arCOG00368">
    <property type="taxonomic scope" value="Archaea"/>
</dbReference>
<dbReference type="HOGENOM" id="CLU_004785_0_2_2"/>
<dbReference type="OrthoDB" id="25344at2157"/>
<dbReference type="PhylomeDB" id="P58302"/>
<dbReference type="Proteomes" id="UP000001017">
    <property type="component" value="Chromosome"/>
</dbReference>
<dbReference type="GO" id="GO:0005524">
    <property type="term" value="F:ATP binding"/>
    <property type="evidence" value="ECO:0007669"/>
    <property type="project" value="UniProtKB-UniRule"/>
</dbReference>
<dbReference type="GO" id="GO:0016887">
    <property type="term" value="F:ATP hydrolysis activity"/>
    <property type="evidence" value="ECO:0007669"/>
    <property type="project" value="UniProtKB-UniRule"/>
</dbReference>
<dbReference type="GO" id="GO:0008270">
    <property type="term" value="F:zinc ion binding"/>
    <property type="evidence" value="ECO:0007669"/>
    <property type="project" value="UniProtKB-UniRule"/>
</dbReference>
<dbReference type="GO" id="GO:0006302">
    <property type="term" value="P:double-strand break repair"/>
    <property type="evidence" value="ECO:0007669"/>
    <property type="project" value="UniProtKB-UniRule"/>
</dbReference>
<dbReference type="Gene3D" id="1.10.287.510">
    <property type="entry name" value="Helix hairpin bin"/>
    <property type="match status" value="1"/>
</dbReference>
<dbReference type="Gene3D" id="3.40.50.300">
    <property type="entry name" value="P-loop containing nucleotide triphosphate hydrolases"/>
    <property type="match status" value="2"/>
</dbReference>
<dbReference type="HAMAP" id="MF_00449">
    <property type="entry name" value="RAD50"/>
    <property type="match status" value="1"/>
</dbReference>
<dbReference type="InterPro" id="IPR027417">
    <property type="entry name" value="P-loop_NTPase"/>
</dbReference>
<dbReference type="InterPro" id="IPR022982">
    <property type="entry name" value="Rad50_ATPase_archaeal"/>
</dbReference>
<dbReference type="InterPro" id="IPR003395">
    <property type="entry name" value="RecF/RecN/SMC_N"/>
</dbReference>
<dbReference type="InterPro" id="IPR013134">
    <property type="entry name" value="Zn_hook_RAD50"/>
</dbReference>
<dbReference type="NCBIfam" id="NF002244">
    <property type="entry name" value="PRK01156.1"/>
    <property type="match status" value="1"/>
</dbReference>
<dbReference type="PANTHER" id="PTHR32114">
    <property type="entry name" value="ABC TRANSPORTER ABCH.3"/>
    <property type="match status" value="1"/>
</dbReference>
<dbReference type="PANTHER" id="PTHR32114:SF2">
    <property type="entry name" value="ABC TRANSPORTER ABCH.3"/>
    <property type="match status" value="1"/>
</dbReference>
<dbReference type="Pfam" id="PF04423">
    <property type="entry name" value="Rad50_zn_hook"/>
    <property type="match status" value="1"/>
</dbReference>
<dbReference type="Pfam" id="PF02463">
    <property type="entry name" value="SMC_N"/>
    <property type="match status" value="1"/>
</dbReference>
<dbReference type="SUPFAM" id="SSF52540">
    <property type="entry name" value="P-loop containing nucleoside triphosphate hydrolases"/>
    <property type="match status" value="1"/>
</dbReference>
<dbReference type="SUPFAM" id="SSF75712">
    <property type="entry name" value="Rad50 coiled-coil Zn hook"/>
    <property type="match status" value="1"/>
</dbReference>
<dbReference type="PROSITE" id="PS51131">
    <property type="entry name" value="ZN_HOOK"/>
    <property type="match status" value="1"/>
</dbReference>
<sequence>MIIERIRLRNFLSHSDSDIYFDTGINMIIGQNGAGKSSIVDAIRFALFSDKRTRRTEDMIKKGERYMEVELYFRSEGHSYRIRRTIERRGKSISTDAEIERDGSIITRGASDVSNYVEKNVLNINKDVFLTSIFVRQGEMDALVSKDPAERKKILDEILNIDRLEAGYLLLKEVIDDLTANVSDYDYLKNELQSKINEIDNNNKQIEELESKLRLIEPEIKALEEEINIKENKKDHLNEELHRLNAQLETIKKYEMELAESQSRKASIEMEVVKLPSIEEELKRLENNAAVVKRNEIIEYINLKKDLGSLSEIIEGLKSDLSKYDEAHRKLEDLQSFRSEFLEKKKRKEDLDKLRSSLKEDEDNYQSAVRNIENIKKWIENEEKEIERMSAFISEILKIQEITPEIINSRRAEINSSLMQIEGKIASLNASIDAMRSHKMEVEENAAMLSGRGVCPVCGTHLGTEKSEDLVKHYGEEASRLEEDINKTENEIKKLDEERKHQKKLLDRINGKDVERLIASYNLLSSKRAELKKFMDDEARLKEAHLKAEAAISQYNSIDLGDLEAKNEEWLKANAVISSIDIENIRSRFEEKNKQLNDIIKRMNEIEVNIPDVESYNENSLKRIDEELNSLRNKKNELYAKKAAMDEIQKTIEHFKEEISKKKGIEDSQAEVNAQLLQINDDLKQLSSRLDKINVDQYEWKSLHKVLLQDNEKLNIAVADIRKRLEKKETIIKAIADLKRVREAFSKDGVPAIIRKSASEFITNQTRQYIQRFELDIDDVDVDQDFNITVFRGGIAEGIDSLSGGERMAVAFALRVAIAQFLNKDVSLLVMDEPTAFLDEDRRSDLANIIEYSLKDSSGIPQVIMISHHRELLSASDLALEVKKRNGSSIVDVIR</sequence>